<sequence length="102" mass="11289">MANLVSVRRRPYRYPHSAIISSIFLIIIFTPDNLNNGATAFCSQLSPPYLDLQPIFSVLSASRQHHIPAFLLALACPIMGLIPMIKDSSTIPISRLPLLPSF</sequence>
<protein>
    <recommendedName>
        <fullName>UPF0328 protein ECU10_1820</fullName>
    </recommendedName>
</protein>
<reference key="1">
    <citation type="journal article" date="2001" name="Nature">
        <title>Genome sequence and gene compaction of the eukaryote parasite Encephalitozoon cuniculi.</title>
        <authorList>
            <person name="Katinka M.D."/>
            <person name="Duprat S."/>
            <person name="Cornillot E."/>
            <person name="Metenier G."/>
            <person name="Thomarat F."/>
            <person name="Prensier G."/>
            <person name="Barbe V."/>
            <person name="Peyretaillade E."/>
            <person name="Brottier P."/>
            <person name="Wincker P."/>
            <person name="Delbac F."/>
            <person name="El Alaoui H."/>
            <person name="Peyret P."/>
            <person name="Saurin W."/>
            <person name="Gouy M."/>
            <person name="Weissenbach J."/>
            <person name="Vivares C.P."/>
        </authorList>
    </citation>
    <scope>NUCLEOTIDE SEQUENCE [LARGE SCALE GENOMIC DNA]</scope>
    <source>
        <strain>GB-M1</strain>
    </source>
</reference>
<reference key="2">
    <citation type="journal article" date="2009" name="BMC Genomics">
        <title>Identification of transcriptional signals in Encephalitozoon cuniculi widespread among Microsporidia phylum: support for accurate structural genome annotation.</title>
        <authorList>
            <person name="Peyretaillade E."/>
            <person name="Goncalves O."/>
            <person name="Terrat S."/>
            <person name="Dugat-Bony E."/>
            <person name="Wincker P."/>
            <person name="Cornman R.S."/>
            <person name="Evans J.D."/>
            <person name="Delbac F."/>
            <person name="Peyret P."/>
        </authorList>
    </citation>
    <scope>GENOME REANNOTATION</scope>
    <source>
        <strain>GB-M1</strain>
    </source>
</reference>
<comment type="similarity">
    <text evidence="1">Belongs to the UPF0328 family.</text>
</comment>
<organism>
    <name type="scientific">Encephalitozoon cuniculi (strain GB-M1)</name>
    <name type="common">Microsporidian parasite</name>
    <dbReference type="NCBI Taxonomy" id="284813"/>
    <lineage>
        <taxon>Eukaryota</taxon>
        <taxon>Fungi</taxon>
        <taxon>Fungi incertae sedis</taxon>
        <taxon>Microsporidia</taxon>
        <taxon>Unikaryonidae</taxon>
        <taxon>Encephalitozoon</taxon>
    </lineage>
</organism>
<proteinExistence type="inferred from homology"/>
<evidence type="ECO:0000305" key="1"/>
<accession>Q8SU95</accession>
<dbReference type="EMBL" id="AL590449">
    <property type="protein sequence ID" value="CAD25903.2"/>
    <property type="molecule type" value="Genomic_DNA"/>
</dbReference>
<dbReference type="RefSeq" id="NP_586299.2">
    <property type="nucleotide sequence ID" value="NM_001042132.2"/>
</dbReference>
<dbReference type="RefSeq" id="NP_597520.1">
    <property type="nucleotide sequence ID" value="NM_001040884.1"/>
</dbReference>
<dbReference type="GeneID" id="859950"/>
<dbReference type="KEGG" id="ecu:ECU03_0080"/>
<dbReference type="KEGG" id="ecu:ECU10_1820"/>
<dbReference type="VEuPathDB" id="MicrosporidiaDB:ECU03_0080"/>
<dbReference type="VEuPathDB" id="MicrosporidiaDB:ECU10_1820"/>
<dbReference type="HOGENOM" id="CLU_2277458_0_0_1"/>
<dbReference type="InParanoid" id="Q8SU95"/>
<dbReference type="Proteomes" id="UP000000819">
    <property type="component" value="Chromosome X"/>
</dbReference>
<name>YAI2_ENCCU</name>
<feature type="chain" id="PRO_0000223142" description="UPF0328 protein ECU10_1820">
    <location>
        <begin position="1"/>
        <end position="102"/>
    </location>
</feature>
<gene>
    <name type="ordered locus">ECU10_1820</name>
</gene>
<keyword id="KW-1185">Reference proteome</keyword>